<keyword id="KW-0010">Activator</keyword>
<keyword id="KW-0963">Cytoplasm</keyword>
<keyword id="KW-0206">Cytoskeleton</keyword>
<keyword id="KW-0472">Membrane</keyword>
<keyword id="KW-0479">Metal-binding</keyword>
<keyword id="KW-0507">mRNA processing</keyword>
<keyword id="KW-0597">Phosphoprotein</keyword>
<keyword id="KW-1185">Reference proteome</keyword>
<keyword id="KW-0677">Repeat</keyword>
<keyword id="KW-0678">Repressor</keyword>
<keyword id="KW-0687">Ribonucleoprotein</keyword>
<keyword id="KW-0694">RNA-binding</keyword>
<keyword id="KW-0810">Translation regulation</keyword>
<keyword id="KW-0832">Ubl conjugation</keyword>
<keyword id="KW-0862">Zinc</keyword>
<reference key="1">
    <citation type="submission" date="2005-04" db="EMBL/GenBank/DDBJ databases">
        <authorList>
            <consortium name="NIH - Xenopus Gene Collection (XGC) project"/>
        </authorList>
    </citation>
    <scope>NUCLEOTIDE SEQUENCE [LARGE SCALE MRNA]</scope>
    <source>
        <tissue>Oocyte</tissue>
    </source>
</reference>
<feature type="chain" id="PRO_0000269258" description="Cytoplasmic polyadenylation element-binding protein 1-B">
    <location>
        <begin position="1"/>
        <end position="568"/>
    </location>
</feature>
<feature type="domain" description="RRM 1" evidence="2">
    <location>
        <begin position="313"/>
        <end position="410"/>
    </location>
</feature>
<feature type="domain" description="RRM 2" evidence="2">
    <location>
        <begin position="432"/>
        <end position="513"/>
    </location>
</feature>
<feature type="region of interest" description="Necessary for interaction with microtubules and localization at the mitotic apparatus" evidence="1">
    <location>
        <begin position="172"/>
        <end position="175"/>
    </location>
</feature>
<feature type="region of interest" description="Necessary for degradation by the proteasome" evidence="1">
    <location>
        <begin position="181"/>
        <end position="208"/>
    </location>
</feature>
<feature type="region of interest" description="Necessary for interaction with microtubules and localization at the mitotic apparatus" evidence="1">
    <location>
        <begin position="182"/>
        <end position="191"/>
    </location>
</feature>
<feature type="binding site" evidence="1">
    <location>
        <position position="517"/>
    </location>
    <ligand>
        <name>Zn(2+)</name>
        <dbReference type="ChEBI" id="CHEBI:29105"/>
        <label>1</label>
    </ligand>
</feature>
<feature type="binding site" evidence="1">
    <location>
        <position position="520"/>
    </location>
    <ligand>
        <name>Zn(2+)</name>
        <dbReference type="ChEBI" id="CHEBI:29105"/>
        <label>1</label>
    </ligand>
</feature>
<feature type="binding site" evidence="1">
    <location>
        <position position="529"/>
    </location>
    <ligand>
        <name>Zn(2+)</name>
        <dbReference type="ChEBI" id="CHEBI:29105"/>
        <label>2</label>
    </ligand>
</feature>
<feature type="binding site" evidence="1">
    <location>
        <position position="534"/>
    </location>
    <ligand>
        <name>Zn(2+)</name>
        <dbReference type="ChEBI" id="CHEBI:29105"/>
        <label>2</label>
    </ligand>
</feature>
<feature type="binding site" evidence="1">
    <location>
        <position position="539"/>
    </location>
    <ligand>
        <name>Zn(2+)</name>
        <dbReference type="ChEBI" id="CHEBI:29105"/>
        <label>1</label>
    </ligand>
</feature>
<feature type="binding site" evidence="1">
    <location>
        <position position="542"/>
    </location>
    <ligand>
        <name>Zn(2+)</name>
        <dbReference type="ChEBI" id="CHEBI:29105"/>
        <label>1</label>
    </ligand>
</feature>
<feature type="binding site" evidence="1">
    <location>
        <position position="547"/>
    </location>
    <ligand>
        <name>Zn(2+)</name>
        <dbReference type="ChEBI" id="CHEBI:29105"/>
        <label>2</label>
    </ligand>
</feature>
<feature type="binding site" evidence="1">
    <location>
        <position position="555"/>
    </location>
    <ligand>
        <name>Zn(2+)</name>
        <dbReference type="ChEBI" id="CHEBI:29105"/>
        <label>2</label>
    </ligand>
</feature>
<feature type="modified residue" description="Phosphoserine; by cdk1" evidence="1">
    <location>
        <position position="138"/>
    </location>
</feature>
<feature type="modified residue" description="Phosphoserine; by aurka" evidence="1">
    <location>
        <position position="174"/>
    </location>
</feature>
<feature type="modified residue" description="Phosphoserine; by cdk1" evidence="1">
    <location>
        <position position="210"/>
    </location>
</feature>
<feature type="modified residue" description="Phosphoserine; by cdk1" evidence="1">
    <location>
        <position position="248"/>
    </location>
</feature>
<protein>
    <recommendedName>
        <fullName>Cytoplasmic polyadenylation element-binding protein 1-B</fullName>
        <shortName>CPE-BP1-B</shortName>
        <shortName>CPE-binding protein 1-B</shortName>
        <shortName>CPEB-1-B</shortName>
    </recommendedName>
</protein>
<dbReference type="EMBL" id="BC094261">
    <property type="protein sequence ID" value="AAH94261.1"/>
    <property type="molecule type" value="mRNA"/>
</dbReference>
<dbReference type="RefSeq" id="NP_001089420.1">
    <property type="nucleotide sequence ID" value="NM_001095951.1"/>
</dbReference>
<dbReference type="SMR" id="Q52KN7"/>
<dbReference type="iPTMnet" id="Q52KN7"/>
<dbReference type="DNASU" id="734470"/>
<dbReference type="GeneID" id="734470"/>
<dbReference type="KEGG" id="xla:734470"/>
<dbReference type="AGR" id="Xenbase:XB-GENE-6256188"/>
<dbReference type="CTD" id="734470"/>
<dbReference type="Xenbase" id="XB-GENE-6256188">
    <property type="gene designation" value="cpeb1.S"/>
</dbReference>
<dbReference type="OMA" id="SVWPNWD"/>
<dbReference type="OrthoDB" id="10033548at2759"/>
<dbReference type="Proteomes" id="UP000186698">
    <property type="component" value="Chromosome 3S"/>
</dbReference>
<dbReference type="Bgee" id="734470">
    <property type="expression patterns" value="Expressed in egg cell and 16 other cell types or tissues"/>
</dbReference>
<dbReference type="GO" id="GO:0005813">
    <property type="term" value="C:centrosome"/>
    <property type="evidence" value="ECO:0007669"/>
    <property type="project" value="UniProtKB-SubCell"/>
</dbReference>
<dbReference type="GO" id="GO:0005737">
    <property type="term" value="C:cytoplasm"/>
    <property type="evidence" value="ECO:0000250"/>
    <property type="project" value="UniProtKB"/>
</dbReference>
<dbReference type="GO" id="GO:0016020">
    <property type="term" value="C:membrane"/>
    <property type="evidence" value="ECO:0007669"/>
    <property type="project" value="UniProtKB-SubCell"/>
</dbReference>
<dbReference type="GO" id="GO:0043005">
    <property type="term" value="C:neuron projection"/>
    <property type="evidence" value="ECO:0000318"/>
    <property type="project" value="GO_Central"/>
</dbReference>
<dbReference type="GO" id="GO:0005634">
    <property type="term" value="C:nucleus"/>
    <property type="evidence" value="ECO:0000250"/>
    <property type="project" value="UniProtKB"/>
</dbReference>
<dbReference type="GO" id="GO:1990904">
    <property type="term" value="C:ribonucleoprotein complex"/>
    <property type="evidence" value="ECO:0007669"/>
    <property type="project" value="UniProtKB-KW"/>
</dbReference>
<dbReference type="GO" id="GO:0000922">
    <property type="term" value="C:spindle pole"/>
    <property type="evidence" value="ECO:0007669"/>
    <property type="project" value="UniProtKB-SubCell"/>
</dbReference>
<dbReference type="GO" id="GO:0045202">
    <property type="term" value="C:synapse"/>
    <property type="evidence" value="ECO:0000318"/>
    <property type="project" value="GO_Central"/>
</dbReference>
<dbReference type="GO" id="GO:0046872">
    <property type="term" value="F:metal ion binding"/>
    <property type="evidence" value="ECO:0007669"/>
    <property type="project" value="UniProtKB-KW"/>
</dbReference>
<dbReference type="GO" id="GO:0035925">
    <property type="term" value="F:mRNA 3'-UTR AU-rich region binding"/>
    <property type="evidence" value="ECO:0000250"/>
    <property type="project" value="UniProtKB"/>
</dbReference>
<dbReference type="GO" id="GO:0003730">
    <property type="term" value="F:mRNA 3'-UTR binding"/>
    <property type="evidence" value="ECO:0000318"/>
    <property type="project" value="GO_Central"/>
</dbReference>
<dbReference type="GO" id="GO:0000900">
    <property type="term" value="F:mRNA regulatory element binding translation repressor activity"/>
    <property type="evidence" value="ECO:0000250"/>
    <property type="project" value="UniProtKB"/>
</dbReference>
<dbReference type="GO" id="GO:0043022">
    <property type="term" value="F:ribosome binding"/>
    <property type="evidence" value="ECO:0000318"/>
    <property type="project" value="GO_Central"/>
</dbReference>
<dbReference type="GO" id="GO:0008135">
    <property type="term" value="F:translation factor activity, RNA binding"/>
    <property type="evidence" value="ECO:0000318"/>
    <property type="project" value="GO_Central"/>
</dbReference>
<dbReference type="GO" id="GO:0071230">
    <property type="term" value="P:cellular response to amino acid stimulus"/>
    <property type="evidence" value="ECO:0000250"/>
    <property type="project" value="UniProtKB"/>
</dbReference>
<dbReference type="GO" id="GO:0071456">
    <property type="term" value="P:cellular response to hypoxia"/>
    <property type="evidence" value="ECO:0000250"/>
    <property type="project" value="UniProtKB"/>
</dbReference>
<dbReference type="GO" id="GO:0032869">
    <property type="term" value="P:cellular response to insulin stimulus"/>
    <property type="evidence" value="ECO:0000250"/>
    <property type="project" value="UniProtKB"/>
</dbReference>
<dbReference type="GO" id="GO:0006397">
    <property type="term" value="P:mRNA processing"/>
    <property type="evidence" value="ECO:0007669"/>
    <property type="project" value="UniProtKB-KW"/>
</dbReference>
<dbReference type="GO" id="GO:2000766">
    <property type="term" value="P:negative regulation of cytoplasmic translation"/>
    <property type="evidence" value="ECO:0000250"/>
    <property type="project" value="UniProtKB"/>
</dbReference>
<dbReference type="CDD" id="cd19757">
    <property type="entry name" value="Bbox1"/>
    <property type="match status" value="1"/>
</dbReference>
<dbReference type="CDD" id="cd12723">
    <property type="entry name" value="RRM1_CPEB1"/>
    <property type="match status" value="1"/>
</dbReference>
<dbReference type="CDD" id="cd12725">
    <property type="entry name" value="RRM2_CPEB1"/>
    <property type="match status" value="1"/>
</dbReference>
<dbReference type="FunFam" id="3.30.70.330:FF:000054">
    <property type="entry name" value="Cytoplasmic polyadenylation element-binding protein 1"/>
    <property type="match status" value="1"/>
</dbReference>
<dbReference type="FunFam" id="3.30.70.330:FF:000086">
    <property type="entry name" value="Putative Cytoplasmic polyadenylation element-binding protein 1"/>
    <property type="match status" value="1"/>
</dbReference>
<dbReference type="FunFam" id="4.10.640.40:FF:000002">
    <property type="entry name" value="Putative Cytoplasmic polyadenylation element-binding protein 1"/>
    <property type="match status" value="1"/>
</dbReference>
<dbReference type="Gene3D" id="3.30.70.330">
    <property type="match status" value="2"/>
</dbReference>
<dbReference type="Gene3D" id="4.10.640.40">
    <property type="entry name" value="Cytoplasmic polyadenylation element-binding protein, ZZ domain"/>
    <property type="match status" value="1"/>
</dbReference>
<dbReference type="InterPro" id="IPR032292">
    <property type="entry name" value="CEBP1_N"/>
</dbReference>
<dbReference type="InterPro" id="IPR032296">
    <property type="entry name" value="CEBP_ZZ"/>
</dbReference>
<dbReference type="InterPro" id="IPR038446">
    <property type="entry name" value="CEBP_ZZ_sf"/>
</dbReference>
<dbReference type="InterPro" id="IPR034819">
    <property type="entry name" value="CPEB"/>
</dbReference>
<dbReference type="InterPro" id="IPR034977">
    <property type="entry name" value="CPEB1_RRM1"/>
</dbReference>
<dbReference type="InterPro" id="IPR012677">
    <property type="entry name" value="Nucleotide-bd_a/b_plait_sf"/>
</dbReference>
<dbReference type="InterPro" id="IPR035979">
    <property type="entry name" value="RBD_domain_sf"/>
</dbReference>
<dbReference type="InterPro" id="IPR000504">
    <property type="entry name" value="RRM_dom"/>
</dbReference>
<dbReference type="PANTHER" id="PTHR12566">
    <property type="entry name" value="CYTOPLASMIC POLYADENYLATION ELEMENT BINDING PROTEIN CPEB"/>
    <property type="match status" value="1"/>
</dbReference>
<dbReference type="PANTHER" id="PTHR12566:SF9">
    <property type="entry name" value="CYTOPLASMIC POLYADENYLATION ELEMENT-BINDING PROTEIN 1"/>
    <property type="match status" value="1"/>
</dbReference>
<dbReference type="Pfam" id="PF16368">
    <property type="entry name" value="CEBP1_N"/>
    <property type="match status" value="1"/>
</dbReference>
<dbReference type="Pfam" id="PF16366">
    <property type="entry name" value="CEBP_ZZ"/>
    <property type="match status" value="1"/>
</dbReference>
<dbReference type="Pfam" id="PF16367">
    <property type="entry name" value="RRM_7"/>
    <property type="match status" value="1"/>
</dbReference>
<dbReference type="SMART" id="SM00360">
    <property type="entry name" value="RRM"/>
    <property type="match status" value="2"/>
</dbReference>
<dbReference type="SUPFAM" id="SSF54928">
    <property type="entry name" value="RNA-binding domain, RBD"/>
    <property type="match status" value="1"/>
</dbReference>
<dbReference type="PROSITE" id="PS50102">
    <property type="entry name" value="RRM"/>
    <property type="match status" value="2"/>
</dbReference>
<evidence type="ECO:0000250" key="1"/>
<evidence type="ECO:0000255" key="2">
    <source>
        <dbReference type="PROSITE-ProRule" id="PRU00176"/>
    </source>
</evidence>
<evidence type="ECO:0000305" key="3"/>
<sequence length="568" mass="62632">MAFPLKDDLGRAKDCWGCSSDTPALSTCSNADIFRRINAMLDNSLDFTGVCTTPNTKGKCEHLQDYPDTEGAAASRMLFSTSHEPLPRGLPDTNDLCLGLQSLSLTGWDRPWSTQDSEAGGQSSTPTAAQSVFSMLNSPMGKPSPLGFLPLDPIGSDLVEKYPTHLLRSSRFDSRSILDSRSSSPSDSDTSGFSSGSDHLSDLISSLRISPPLPFLPLGSGISRDPLRLGVGSRLDQDHAALAAATASPLGITKRWPGTSVWPSWDLLDSADDPFSIEREARLHRQAAAVNEATCTWSGQLPPRNYKNPVYSCKVFLGGVPWDITETGLINTFRVFGALSVEWPGKDGKHPRCPPKGNMPKGYVYLVFESEKSVRALLQACTQDLLSQDGLSEHYFKMSSRRMRCKEVQVIPWVLADSNFVRSPSQRLDPSKTVFVGALHGMLNAEALASIMNDLFGGVVYAGIDTDKHKYPIGSGRVTFNNQRSYLKAVSAAFVEIKTAKFTKKVQIDPYLEDSVCQVCNAQPGPFFCRDQVCFKYFCRSCWHWQHSMEILRHHRPLMRNQKSRDSS</sequence>
<name>CPE1B_XENLA</name>
<accession>Q52KN7</accession>
<proteinExistence type="evidence at transcript level"/>
<organism>
    <name type="scientific">Xenopus laevis</name>
    <name type="common">African clawed frog</name>
    <dbReference type="NCBI Taxonomy" id="8355"/>
    <lineage>
        <taxon>Eukaryota</taxon>
        <taxon>Metazoa</taxon>
        <taxon>Chordata</taxon>
        <taxon>Craniata</taxon>
        <taxon>Vertebrata</taxon>
        <taxon>Euteleostomi</taxon>
        <taxon>Amphibia</taxon>
        <taxon>Batrachia</taxon>
        <taxon>Anura</taxon>
        <taxon>Pipoidea</taxon>
        <taxon>Pipidae</taxon>
        <taxon>Xenopodinae</taxon>
        <taxon>Xenopus</taxon>
        <taxon>Xenopus</taxon>
    </lineage>
</organism>
<gene>
    <name type="primary">cpeb1-b</name>
</gene>
<comment type="function">
    <text evidence="1">Sequence-specific RNA-binding protein that regulates mRNA cytoplasmic polyadenylation and translation initiation during oocyte maturation and early development. Binds to the cytoplasmic polyadenylation element (CPE), an uridine-rich sequence element (consensus sequence 5'-UUUUUAU-3') within the mRNA 3'-UTR. In the absence of phosphorylation and in association with tacc3/maskin, also acts as a repressor of translation of CPE-containing mRNA; a repression that is relieved by phosphorylation or degradation. Requires zinc for RNA binding. Involved in the cell cycle progression from S phase into M phase (By similarity).</text>
</comment>
<comment type="subunit">
    <text evidence="1">Found in a complex with cpeb1, tacc3/maskin and eif4e; dissolution of this complex results in the binding of eif4e to eif4g and the translational activation of CPE-containing mRNAs. Found in a complex with cpeb1, cpsf1, the cytoplasmic poly(A) polymerase papd4/gld2 and sympk. Found in a mRNP complex with cpeb1, a guanine exchange factor xgef and mos mRNA. Interacts with cpsf1, papd4/gld2, tacc3/maskin, microtubules, sympk and xgef. Component of a ribonucleoprotein (RNP) complex, at least composed of cpeb1, lsm14b/rap55b, ddx6/Xp54, ybx2/frgy2, pat1/P100, eif4enif1/4E-T and eif4e1b. Interaction with ybx2/frgy2 is RNA-dependent. May interact with aplp1. Interaction with cpsf1 increases during meiotic maturation and is not mediated through RNA. Interaction with xgef is necessary for its early activating phosphorylation status (By similarity).</text>
</comment>
<comment type="subcellular location">
    <subcellularLocation>
        <location evidence="1">Cytoplasm</location>
    </subcellularLocation>
    <subcellularLocation>
        <location evidence="1">Cytoplasm</location>
        <location evidence="1">Cytoskeleton</location>
        <location evidence="1">Microtubule organizing center</location>
        <location evidence="1">Centrosome</location>
    </subcellularLocation>
    <subcellularLocation>
        <location evidence="1">Membrane</location>
    </subcellularLocation>
    <subcellularLocation>
        <location evidence="1">Cytoplasm</location>
        <location evidence="1">Cytoskeleton</location>
        <location evidence="1">Spindle pole</location>
    </subcellularLocation>
    <text evidence="1">During mitosis localizes with tacc3/maskin and CPE-containing mRNAs to both spindle poles. Membrane-associated. Colocalizes with members of the polyadenylation and translation complex factors (cpsf, aplp1, tacc3/maskin, aurka, etc.), including CPE-containing RNAs (By similarity).</text>
</comment>
<comment type="domain">
    <text evidence="1">The 2 RRM domains and the C-terminal region mediate interaction with CPE-containing RNA.</text>
</comment>
<comment type="PTM">
    <text evidence="1">Ser-174 phosphorylation by aurka in immature oocytes is essential to trigger CPE-containing mRNA cytoplasmic polyadenylation and translation activation and the subsequent signaling events that result in meiotic progression. Ser-174 phosphorylation recruits the cleavage and polyadenylation specificity factor (cpsf1) into an active cytoplasmic polyadenylation complex. Ser-174 phosphorylation increases its affinity for cpsf1 and papd4/gld2. Heavily phosphorylated by CDK1 on serines late during oocyte maturation. Ser-210 phosphorylation is sufficient to target cpeb1 for degradation. Ser-174 phosphorylation oscillates with the cell cycle (phosphorylated at M phase, but not at S phase) and is necessary for S phase to M phase progression. Phosphorylation at Ser-174 may be promoted by aplp1 (By similarity).</text>
</comment>
<comment type="PTM">
    <text evidence="1">Ubiquitinated. Requires a PEST box and the proteasome pathway for destruction during oocyte maturation. Ser-210 phosphorylation triggers its destruction, an event important to allow the transition from metaphase I to metaphase II and cytokinesis in the early embryo (By similarity).</text>
</comment>
<comment type="similarity">
    <text evidence="3">Belongs to the RRM CPEB family.</text>
</comment>